<sequence>MRFAIVVTGPAYGTQQASSAFQFAQALIVEGHELSSVFFYREGVYNANQLTSPASDEFDLVRGWQQLNAQHGVALNICVAAALRRGIVDETEAGRLGLASSNLQPGFTLSGLGALAEASLTCDRVVQF</sequence>
<feature type="chain" id="PRO_1000122862" description="Sulfurtransferase TusD">
    <location>
        <begin position="1"/>
        <end position="128"/>
    </location>
</feature>
<feature type="active site" description="Cysteine persulfide intermediate" evidence="1">
    <location>
        <position position="78"/>
    </location>
</feature>
<proteinExistence type="inferred from homology"/>
<comment type="function">
    <text evidence="1">Part of a sulfur-relay system required for 2-thiolation of 5-methylaminomethyl-2-thiouridine (mnm(5)s(2)U) at tRNA wobble positions. Accepts sulfur from TusA and transfers it in turn to TusE.</text>
</comment>
<comment type="subunit">
    <text evidence="1">Heterohexamer, formed by a dimer of trimers. The hexameric TusBCD complex contains 2 copies each of TusB, TusC and TusD. The TusBCD complex interacts with TusE.</text>
</comment>
<comment type="subcellular location">
    <subcellularLocation>
        <location evidence="1">Cytoplasm</location>
    </subcellularLocation>
</comment>
<comment type="similarity">
    <text evidence="1">Belongs to the DsrE/TusD family.</text>
</comment>
<protein>
    <recommendedName>
        <fullName evidence="1">Sulfurtransferase TusD</fullName>
        <ecNumber evidence="1">2.8.1.-</ecNumber>
    </recommendedName>
    <alternativeName>
        <fullName evidence="1">tRNA 2-thiouridine synthesizing protein D</fullName>
    </alternativeName>
</protein>
<keyword id="KW-0963">Cytoplasm</keyword>
<keyword id="KW-0808">Transferase</keyword>
<keyword id="KW-0819">tRNA processing</keyword>
<name>TUSD_ECOSE</name>
<organism>
    <name type="scientific">Escherichia coli (strain SE11)</name>
    <dbReference type="NCBI Taxonomy" id="409438"/>
    <lineage>
        <taxon>Bacteria</taxon>
        <taxon>Pseudomonadati</taxon>
        <taxon>Pseudomonadota</taxon>
        <taxon>Gammaproteobacteria</taxon>
        <taxon>Enterobacterales</taxon>
        <taxon>Enterobacteriaceae</taxon>
        <taxon>Escherichia</taxon>
    </lineage>
</organism>
<gene>
    <name evidence="1" type="primary">tusD</name>
    <name type="ordered locus">ECSE_3606</name>
</gene>
<accession>B6I245</accession>
<evidence type="ECO:0000255" key="1">
    <source>
        <dbReference type="HAMAP-Rule" id="MF_00390"/>
    </source>
</evidence>
<dbReference type="EC" id="2.8.1.-" evidence="1"/>
<dbReference type="EMBL" id="AP009240">
    <property type="protein sequence ID" value="BAG79130.1"/>
    <property type="molecule type" value="Genomic_DNA"/>
</dbReference>
<dbReference type="RefSeq" id="WP_001209710.1">
    <property type="nucleotide sequence ID" value="NC_011415.1"/>
</dbReference>
<dbReference type="SMR" id="B6I245"/>
<dbReference type="GeneID" id="75206288"/>
<dbReference type="KEGG" id="ecy:ECSE_3606"/>
<dbReference type="HOGENOM" id="CLU_132095_0_0_6"/>
<dbReference type="Proteomes" id="UP000008199">
    <property type="component" value="Chromosome"/>
</dbReference>
<dbReference type="GO" id="GO:1990228">
    <property type="term" value="C:sulfurtransferase complex"/>
    <property type="evidence" value="ECO:0007669"/>
    <property type="project" value="TreeGrafter"/>
</dbReference>
<dbReference type="GO" id="GO:0097163">
    <property type="term" value="F:sulfur carrier activity"/>
    <property type="evidence" value="ECO:0007669"/>
    <property type="project" value="TreeGrafter"/>
</dbReference>
<dbReference type="GO" id="GO:0016783">
    <property type="term" value="F:sulfurtransferase activity"/>
    <property type="evidence" value="ECO:0007669"/>
    <property type="project" value="UniProtKB-UniRule"/>
</dbReference>
<dbReference type="GO" id="GO:0002143">
    <property type="term" value="P:tRNA wobble position uridine thiolation"/>
    <property type="evidence" value="ECO:0007669"/>
    <property type="project" value="TreeGrafter"/>
</dbReference>
<dbReference type="FunFam" id="3.40.1260.10:FF:000001">
    <property type="entry name" value="Sulfurtransferase TusD"/>
    <property type="match status" value="1"/>
</dbReference>
<dbReference type="Gene3D" id="3.40.1260.10">
    <property type="entry name" value="DsrEFH-like"/>
    <property type="match status" value="1"/>
</dbReference>
<dbReference type="HAMAP" id="MF_00390">
    <property type="entry name" value="Thiourid_synth_D"/>
    <property type="match status" value="1"/>
</dbReference>
<dbReference type="InterPro" id="IPR027396">
    <property type="entry name" value="DsrEFH-like"/>
</dbReference>
<dbReference type="InterPro" id="IPR003787">
    <property type="entry name" value="Sulphur_relay_DsrE/F-like"/>
</dbReference>
<dbReference type="InterPro" id="IPR017463">
    <property type="entry name" value="Sulphur_relay_TusD/DsrE"/>
</dbReference>
<dbReference type="NCBIfam" id="NF001237">
    <property type="entry name" value="PRK00207.1"/>
    <property type="match status" value="1"/>
</dbReference>
<dbReference type="NCBIfam" id="TIGR03012">
    <property type="entry name" value="sulf_tusD_dsrE"/>
    <property type="match status" value="1"/>
</dbReference>
<dbReference type="PANTHER" id="PTHR34874">
    <property type="entry name" value="PROTEIN YCHN"/>
    <property type="match status" value="1"/>
</dbReference>
<dbReference type="PANTHER" id="PTHR34874:SF3">
    <property type="entry name" value="SULFURTRANSFERASE TUSD"/>
    <property type="match status" value="1"/>
</dbReference>
<dbReference type="Pfam" id="PF02635">
    <property type="entry name" value="DsrE"/>
    <property type="match status" value="1"/>
</dbReference>
<dbReference type="SUPFAM" id="SSF75169">
    <property type="entry name" value="DsrEFH-like"/>
    <property type="match status" value="1"/>
</dbReference>
<reference key="1">
    <citation type="journal article" date="2008" name="DNA Res.">
        <title>Complete genome sequence and comparative analysis of the wild-type commensal Escherichia coli strain SE11 isolated from a healthy adult.</title>
        <authorList>
            <person name="Oshima K."/>
            <person name="Toh H."/>
            <person name="Ogura Y."/>
            <person name="Sasamoto H."/>
            <person name="Morita H."/>
            <person name="Park S.-H."/>
            <person name="Ooka T."/>
            <person name="Iyoda S."/>
            <person name="Taylor T.D."/>
            <person name="Hayashi T."/>
            <person name="Itoh K."/>
            <person name="Hattori M."/>
        </authorList>
    </citation>
    <scope>NUCLEOTIDE SEQUENCE [LARGE SCALE GENOMIC DNA]</scope>
    <source>
        <strain>SE11</strain>
    </source>
</reference>